<feature type="chain" id="PRO_0000420519" description="3-methyl-2-oxobutanoate dehydrogenase subunit beta">
    <location>
        <begin position="1"/>
        <end position="348"/>
    </location>
</feature>
<feature type="active site" description="Proton acceptor" evidence="1">
    <location>
        <position position="151"/>
    </location>
</feature>
<feature type="binding site" evidence="1">
    <location>
        <position position="51"/>
    </location>
    <ligand>
        <name>thiamine diphosphate</name>
        <dbReference type="ChEBI" id="CHEBI:58937"/>
    </ligand>
</feature>
<feature type="binding site" evidence="1">
    <location>
        <begin position="80"/>
        <end position="82"/>
    </location>
    <ligand>
        <name>thiamine diphosphate</name>
        <dbReference type="ChEBI" id="CHEBI:58937"/>
    </ligand>
</feature>
<feature type="binding site" evidence="1">
    <location>
        <position position="104"/>
    </location>
    <ligand>
        <name>thiamine diphosphate</name>
        <dbReference type="ChEBI" id="CHEBI:58937"/>
    </ligand>
</feature>
<feature type="binding site" evidence="1">
    <location>
        <begin position="105"/>
        <end position="108"/>
    </location>
    <ligand>
        <name>substrate</name>
    </ligand>
</feature>
<feature type="binding site" evidence="1">
    <location>
        <begin position="108"/>
        <end position="111"/>
    </location>
    <ligand>
        <name>thiamine diphosphate</name>
        <dbReference type="ChEBI" id="CHEBI:58937"/>
    </ligand>
</feature>
<feature type="binding site" evidence="1">
    <location>
        <position position="151"/>
    </location>
    <ligand>
        <name>substrate</name>
    </ligand>
</feature>
<sequence length="348" mass="38064">MTQIADRPARPDETLAVAVSDITQSLTMVQAINRALYDAMAADERVLVFGEDVAVEGGVFRVTEGLADTFGADRCFDTPLAESAIIGIAVGLALRGFVPVPEIQFDGFSYPAFDQVVSHLAKYRTRTRGEVDMPVTVRIPSFGGIGAAEHHSDSTESYWVHTAGLKVVVPSTPGDAYWLLRHAIACPDPVMYLEPKRRYHGRGMVDTSRPEPPIGHAMVRRSGTDVTVVTYGNLVSTALSSADTAEQQHDWSLEVIDLRSLAPLDFDTIAASIQRTGRCVVMHEGPRSLGYGAGLAARIQEEMFYQLEAPVLRACGFDTPYPPARLEKLWLPGPDRLLDCVERVLRQP</sequence>
<protein>
    <recommendedName>
        <fullName>3-methyl-2-oxobutanoate dehydrogenase subunit beta</fullName>
        <ecNumber>1.2.4.4</ecNumber>
    </recommendedName>
    <alternativeName>
        <fullName>Branched-chain alpha-ketoacid dehydrogenase E1 component subunit beta</fullName>
        <shortName>BCKADH E1-beta</shortName>
    </alternativeName>
</protein>
<gene>
    <name type="primary">bkdB</name>
    <name type="synonym">pdhB</name>
    <name type="ordered locus">Rv2496c</name>
</gene>
<dbReference type="EC" id="1.2.4.4"/>
<dbReference type="EMBL" id="AL123456">
    <property type="protein sequence ID" value="CCP45290.1"/>
    <property type="molecule type" value="Genomic_DNA"/>
</dbReference>
<dbReference type="PIR" id="H70549">
    <property type="entry name" value="H70549"/>
</dbReference>
<dbReference type="RefSeq" id="NP_217012.1">
    <property type="nucleotide sequence ID" value="NC_000962.3"/>
</dbReference>
<dbReference type="RefSeq" id="WP_003412757.1">
    <property type="nucleotide sequence ID" value="NZ_NVQJ01000063.1"/>
</dbReference>
<dbReference type="SMR" id="P9WIS1"/>
<dbReference type="FunCoup" id="P9WIS1">
    <property type="interactions" value="385"/>
</dbReference>
<dbReference type="STRING" id="83332.Rv2496c"/>
<dbReference type="PaxDb" id="83332-Rv2496c"/>
<dbReference type="GeneID" id="45426490"/>
<dbReference type="GeneID" id="888571"/>
<dbReference type="KEGG" id="mtu:Rv2496c"/>
<dbReference type="KEGG" id="mtv:RVBD_2496c"/>
<dbReference type="TubercuList" id="Rv2496c"/>
<dbReference type="eggNOG" id="COG0022">
    <property type="taxonomic scope" value="Bacteria"/>
</dbReference>
<dbReference type="InParanoid" id="P9WIS1"/>
<dbReference type="OrthoDB" id="3457658at2"/>
<dbReference type="PhylomeDB" id="P9WIS1"/>
<dbReference type="Proteomes" id="UP000001584">
    <property type="component" value="Chromosome"/>
</dbReference>
<dbReference type="GO" id="GO:0009274">
    <property type="term" value="C:peptidoglycan-based cell wall"/>
    <property type="evidence" value="ECO:0007005"/>
    <property type="project" value="MTBBASE"/>
</dbReference>
<dbReference type="GO" id="GO:0005886">
    <property type="term" value="C:plasma membrane"/>
    <property type="evidence" value="ECO:0007005"/>
    <property type="project" value="MTBBASE"/>
</dbReference>
<dbReference type="GO" id="GO:0003863">
    <property type="term" value="F:3-methyl-2-oxobutanoate dehydrogenase (2-methylpropanoyl-transferring) activity"/>
    <property type="evidence" value="ECO:0007669"/>
    <property type="project" value="UniProtKB-EC"/>
</dbReference>
<dbReference type="GO" id="GO:0000287">
    <property type="term" value="F:magnesium ion binding"/>
    <property type="evidence" value="ECO:0007669"/>
    <property type="project" value="UniProtKB-ARBA"/>
</dbReference>
<dbReference type="GO" id="GO:0009083">
    <property type="term" value="P:branched-chain amino acid catabolic process"/>
    <property type="evidence" value="ECO:0000318"/>
    <property type="project" value="GO_Central"/>
</dbReference>
<dbReference type="GO" id="GO:0007584">
    <property type="term" value="P:response to nutrient"/>
    <property type="evidence" value="ECO:0000318"/>
    <property type="project" value="GO_Central"/>
</dbReference>
<dbReference type="CDD" id="cd07036">
    <property type="entry name" value="TPP_PYR_E1-PDHc-beta_like"/>
    <property type="match status" value="1"/>
</dbReference>
<dbReference type="FunFam" id="3.40.50.920:FF:000001">
    <property type="entry name" value="Pyruvate dehydrogenase E1 beta subunit"/>
    <property type="match status" value="1"/>
</dbReference>
<dbReference type="FunFam" id="3.40.50.970:FF:000001">
    <property type="entry name" value="Pyruvate dehydrogenase E1 beta subunit"/>
    <property type="match status" value="1"/>
</dbReference>
<dbReference type="Gene3D" id="3.40.50.920">
    <property type="match status" value="1"/>
</dbReference>
<dbReference type="Gene3D" id="3.40.50.970">
    <property type="match status" value="1"/>
</dbReference>
<dbReference type="InterPro" id="IPR029061">
    <property type="entry name" value="THDP-binding"/>
</dbReference>
<dbReference type="InterPro" id="IPR009014">
    <property type="entry name" value="Transketo_C/PFOR_II"/>
</dbReference>
<dbReference type="InterPro" id="IPR005475">
    <property type="entry name" value="Transketolase-like_Pyr-bd"/>
</dbReference>
<dbReference type="InterPro" id="IPR033248">
    <property type="entry name" value="Transketolase_C"/>
</dbReference>
<dbReference type="PANTHER" id="PTHR42980:SF1">
    <property type="entry name" value="2-OXOISOVALERATE DEHYDROGENASE SUBUNIT BETA, MITOCHONDRIAL"/>
    <property type="match status" value="1"/>
</dbReference>
<dbReference type="PANTHER" id="PTHR42980">
    <property type="entry name" value="2-OXOISOVALERATE DEHYDROGENASE SUBUNIT BETA-RELATED"/>
    <property type="match status" value="1"/>
</dbReference>
<dbReference type="Pfam" id="PF02779">
    <property type="entry name" value="Transket_pyr"/>
    <property type="match status" value="1"/>
</dbReference>
<dbReference type="Pfam" id="PF02780">
    <property type="entry name" value="Transketolase_C"/>
    <property type="match status" value="1"/>
</dbReference>
<dbReference type="SMART" id="SM00861">
    <property type="entry name" value="Transket_pyr"/>
    <property type="match status" value="1"/>
</dbReference>
<dbReference type="SUPFAM" id="SSF52518">
    <property type="entry name" value="Thiamin diphosphate-binding fold (THDP-binding)"/>
    <property type="match status" value="1"/>
</dbReference>
<dbReference type="SUPFAM" id="SSF52922">
    <property type="entry name" value="TK C-terminal domain-like"/>
    <property type="match status" value="1"/>
</dbReference>
<organism>
    <name type="scientific">Mycobacterium tuberculosis (strain ATCC 25618 / H37Rv)</name>
    <dbReference type="NCBI Taxonomy" id="83332"/>
    <lineage>
        <taxon>Bacteria</taxon>
        <taxon>Bacillati</taxon>
        <taxon>Actinomycetota</taxon>
        <taxon>Actinomycetes</taxon>
        <taxon>Mycobacteriales</taxon>
        <taxon>Mycobacteriaceae</taxon>
        <taxon>Mycobacterium</taxon>
        <taxon>Mycobacterium tuberculosis complex</taxon>
    </lineage>
</organism>
<evidence type="ECO:0000250" key="1"/>
<evidence type="ECO:0000269" key="2">
    <source>
    </source>
</evidence>
<evidence type="ECO:0000269" key="3">
    <source>
    </source>
</evidence>
<evidence type="ECO:0000269" key="4">
    <source>
    </source>
</evidence>
<accession>P9WIS1</accession>
<accession>F2GH62</accession>
<accession>L0T9T3</accession>
<accession>O06160</accession>
<accession>Q7D715</accession>
<keyword id="KW-0560">Oxidoreductase</keyword>
<keyword id="KW-1185">Reference proteome</keyword>
<keyword id="KW-0786">Thiamine pyrophosphate</keyword>
<reference key="1">
    <citation type="journal article" date="1998" name="Nature">
        <title>Deciphering the biology of Mycobacterium tuberculosis from the complete genome sequence.</title>
        <authorList>
            <person name="Cole S.T."/>
            <person name="Brosch R."/>
            <person name="Parkhill J."/>
            <person name="Garnier T."/>
            <person name="Churcher C.M."/>
            <person name="Harris D.E."/>
            <person name="Gordon S.V."/>
            <person name="Eiglmeier K."/>
            <person name="Gas S."/>
            <person name="Barry C.E. III"/>
            <person name="Tekaia F."/>
            <person name="Badcock K."/>
            <person name="Basham D."/>
            <person name="Brown D."/>
            <person name="Chillingworth T."/>
            <person name="Connor R."/>
            <person name="Davies R.M."/>
            <person name="Devlin K."/>
            <person name="Feltwell T."/>
            <person name="Gentles S."/>
            <person name="Hamlin N."/>
            <person name="Holroyd S."/>
            <person name="Hornsby T."/>
            <person name="Jagels K."/>
            <person name="Krogh A."/>
            <person name="McLean J."/>
            <person name="Moule S."/>
            <person name="Murphy L.D."/>
            <person name="Oliver S."/>
            <person name="Osborne J."/>
            <person name="Quail M.A."/>
            <person name="Rajandream M.A."/>
            <person name="Rogers J."/>
            <person name="Rutter S."/>
            <person name="Seeger K."/>
            <person name="Skelton S."/>
            <person name="Squares S."/>
            <person name="Squares R."/>
            <person name="Sulston J.E."/>
            <person name="Taylor K."/>
            <person name="Whitehead S."/>
            <person name="Barrell B.G."/>
        </authorList>
    </citation>
    <scope>NUCLEOTIDE SEQUENCE [LARGE SCALE GENOMIC DNA]</scope>
    <source>
        <strain>ATCC 25618 / H37Rv</strain>
    </source>
</reference>
<reference key="2">
    <citation type="journal article" date="2002" name="Mol. Microbiol.">
        <title>Evaluation of a nutrient starvation model of Mycobacterium tuberculosis persistence by gene and protein expression profiling.</title>
        <authorList>
            <person name="Betts J.C."/>
            <person name="Lukey P.T."/>
            <person name="Robb L.C."/>
            <person name="McAdam R.A."/>
            <person name="Duncan K."/>
        </authorList>
    </citation>
    <scope>INDUCTION BY STARVATION</scope>
    <source>
        <strain>ATCC 25618 / H37Rv</strain>
    </source>
</reference>
<reference key="3">
    <citation type="journal article" date="2005" name="Mol. Microbiol.">
        <title>Mycobacterium tuberculosis appears to lack alpha-ketoglutarate dehydrogenase and encodes pyruvate dehydrogenase in widely separated genes.</title>
        <authorList>
            <person name="Tian J."/>
            <person name="Bryk R."/>
            <person name="Shi S."/>
            <person name="Erdjument-Bromage H."/>
            <person name="Tempst P."/>
            <person name="Nathan C."/>
        </authorList>
    </citation>
    <scope>NO FUNCTION AS A PDH COMPONENT</scope>
    <scope>SUBUNIT</scope>
    <source>
        <strain>ATCC 25618 / H37Rv</strain>
    </source>
</reference>
<reference key="4">
    <citation type="journal article" date="2011" name="Cell Host Microbe">
        <title>Virulence of Mycobacterium tuberculosis depends on lipoamide dehydrogenase, a member of three multienzyme complexes.</title>
        <authorList>
            <person name="Venugopal A."/>
            <person name="Bryk R."/>
            <person name="Shi S."/>
            <person name="Rhee K."/>
            <person name="Rath P."/>
            <person name="Schnappinger D."/>
            <person name="Ehrt S."/>
            <person name="Nathan C."/>
        </authorList>
    </citation>
    <scope>FUNCTION AS A BCKADH COMPONENT</scope>
    <scope>INDUCTION</scope>
    <scope>GENE NAME</scope>
    <scope>IDENTIFICATION IN THE BCKADH COMPLEX</scope>
    <source>
        <strain>ATCC 25618 / H37Rv</strain>
    </source>
</reference>
<reference key="5">
    <citation type="journal article" date="2011" name="Mol. Cell. Proteomics">
        <title>Proteogenomic analysis of Mycobacterium tuberculosis by high resolution mass spectrometry.</title>
        <authorList>
            <person name="Kelkar D.S."/>
            <person name="Kumar D."/>
            <person name="Kumar P."/>
            <person name="Balakrishnan L."/>
            <person name="Muthusamy B."/>
            <person name="Yadav A.K."/>
            <person name="Shrivastava P."/>
            <person name="Marimuthu A."/>
            <person name="Anand S."/>
            <person name="Sundaram H."/>
            <person name="Kingsbury R."/>
            <person name="Harsha H.C."/>
            <person name="Nair B."/>
            <person name="Prasad T.S."/>
            <person name="Chauhan D.S."/>
            <person name="Katoch K."/>
            <person name="Katoch V.M."/>
            <person name="Kumar P."/>
            <person name="Chaerkady R."/>
            <person name="Ramachandran S."/>
            <person name="Dash D."/>
            <person name="Pandey A."/>
        </authorList>
    </citation>
    <scope>IDENTIFICATION BY MASS SPECTROMETRY [LARGE SCALE ANALYSIS]</scope>
    <source>
        <strain>ATCC 25618 / H37Rv</strain>
    </source>
</reference>
<proteinExistence type="evidence at protein level"/>
<name>BKDB_MYCTU</name>
<comment type="function">
    <text evidence="4">Component of the branched-chain alpha-ketoacid dehydrogenase (BCKADH) complex, that catalyzes the overall conversion of branched-chain alpha-ketoacids to acyl-CoA and CO(2).</text>
</comment>
<comment type="catalytic activity">
    <reaction>
        <text>N(6)-[(R)-lipoyl]-L-lysyl-[protein] + 3-methyl-2-oxobutanoate + H(+) = N(6)-[(R)-S(8)-2-methylpropanoyldihydrolipoyl]-L-lysyl-[protein] + CO2</text>
        <dbReference type="Rhea" id="RHEA:13457"/>
        <dbReference type="Rhea" id="RHEA-COMP:10474"/>
        <dbReference type="Rhea" id="RHEA-COMP:10497"/>
        <dbReference type="ChEBI" id="CHEBI:11851"/>
        <dbReference type="ChEBI" id="CHEBI:15378"/>
        <dbReference type="ChEBI" id="CHEBI:16526"/>
        <dbReference type="ChEBI" id="CHEBI:83099"/>
        <dbReference type="ChEBI" id="CHEBI:83142"/>
        <dbReference type="EC" id="1.2.4.4"/>
    </reaction>
</comment>
<comment type="cofactor">
    <cofactor evidence="1">
        <name>thiamine diphosphate</name>
        <dbReference type="ChEBI" id="CHEBI:58937"/>
    </cofactor>
</comment>
<comment type="subunit">
    <text evidence="3 4">Heteromer of E1 alpha (BkdA) and beta (BkdB) subunits. Part of the BCKADH complex, consisting of multiple copies of BkdA/BkdB (E1), BkdC (E2) and Lpd (E3).</text>
</comment>
<comment type="induction">
    <text evidence="2 4">Up-regulated upon nutrient starvation. Is also highly up-regulated in a DlaT-deficient strain. Part of the bkdABC operon.</text>
</comment>